<protein>
    <recommendedName>
        <fullName evidence="1">Catalase-peroxidase</fullName>
        <shortName evidence="1">CP</shortName>
        <ecNumber evidence="1">1.11.1.21</ecNumber>
    </recommendedName>
    <alternativeName>
        <fullName evidence="1">Peroxidase/catalase</fullName>
    </alternativeName>
</protein>
<name>KATG_PSEF5</name>
<reference key="1">
    <citation type="journal article" date="2005" name="Nat. Biotechnol.">
        <title>Complete genome sequence of the plant commensal Pseudomonas fluorescens Pf-5.</title>
        <authorList>
            <person name="Paulsen I.T."/>
            <person name="Press C.M."/>
            <person name="Ravel J."/>
            <person name="Kobayashi D.Y."/>
            <person name="Myers G.S.A."/>
            <person name="Mavrodi D.V."/>
            <person name="DeBoy R.T."/>
            <person name="Seshadri R."/>
            <person name="Ren Q."/>
            <person name="Madupu R."/>
            <person name="Dodson R.J."/>
            <person name="Durkin A.S."/>
            <person name="Brinkac L.M."/>
            <person name="Daugherty S.C."/>
            <person name="Sullivan S.A."/>
            <person name="Rosovitz M.J."/>
            <person name="Gwinn M.L."/>
            <person name="Zhou L."/>
            <person name="Schneider D.J."/>
            <person name="Cartinhour S.W."/>
            <person name="Nelson W.C."/>
            <person name="Weidman J."/>
            <person name="Watkins K."/>
            <person name="Tran K."/>
            <person name="Khouri H."/>
            <person name="Pierson E.A."/>
            <person name="Pierson L.S. III"/>
            <person name="Thomashow L.S."/>
            <person name="Loper J.E."/>
        </authorList>
    </citation>
    <scope>NUCLEOTIDE SEQUENCE [LARGE SCALE GENOMIC DNA]</scope>
    <source>
        <strain>ATCC BAA-477 / NRRL B-23932 / Pf-5</strain>
    </source>
</reference>
<keyword id="KW-0349">Heme</keyword>
<keyword id="KW-0376">Hydrogen peroxide</keyword>
<keyword id="KW-0408">Iron</keyword>
<keyword id="KW-0479">Metal-binding</keyword>
<keyword id="KW-0560">Oxidoreductase</keyword>
<keyword id="KW-0575">Peroxidase</keyword>
<feature type="chain" id="PRO_0000354863" description="Catalase-peroxidase">
    <location>
        <begin position="1"/>
        <end position="726"/>
    </location>
</feature>
<feature type="region of interest" description="Disordered" evidence="2">
    <location>
        <begin position="335"/>
        <end position="362"/>
    </location>
</feature>
<feature type="active site" description="Proton acceptor" evidence="1">
    <location>
        <position position="92"/>
    </location>
</feature>
<feature type="binding site" description="axial binding residue" evidence="1">
    <location>
        <position position="255"/>
    </location>
    <ligand>
        <name>heme b</name>
        <dbReference type="ChEBI" id="CHEBI:60344"/>
    </ligand>
    <ligandPart>
        <name>Fe</name>
        <dbReference type="ChEBI" id="CHEBI:18248"/>
    </ligandPart>
</feature>
<feature type="site" description="Transition state stabilizer" evidence="1">
    <location>
        <position position="88"/>
    </location>
</feature>
<feature type="cross-link" description="Tryptophyl-tyrosyl-methioninium (Trp-Tyr) (with M-240)" evidence="1">
    <location>
        <begin position="91"/>
        <end position="214"/>
    </location>
</feature>
<feature type="cross-link" description="Tryptophyl-tyrosyl-methioninium (Tyr-Met) (with W-91)" evidence="1">
    <location>
        <begin position="214"/>
        <end position="240"/>
    </location>
</feature>
<evidence type="ECO:0000255" key="1">
    <source>
        <dbReference type="HAMAP-Rule" id="MF_01961"/>
    </source>
</evidence>
<evidence type="ECO:0000256" key="2">
    <source>
        <dbReference type="SAM" id="MobiDB-lite"/>
    </source>
</evidence>
<proteinExistence type="inferred from homology"/>
<sequence>MSNESKCPFKHTAGEGTSNRDWWPGQLNLKILHQHSRLSDPMAEGFDYAAEFKTLDLAAVKRDLQALMTDSQPWWPADFGHYGPLFIRMAWHSAGTYRIADGRGGAGGGQQRFAPLNSWPDNVSLDKARRLIWPIKQKYGRKISWADLIILTGNVALESMGFKTFGFAGGRQDVWEPEDNVYWGSETTWLDDQRYSGDRELENPLGAVQMGLIYVNPEGPNGNPDPLAAARDIRETFARMAMDDEETVALIAGGHTFGKTHGAGPATHVGPEPEAAGLEEQGLGWKSSFGTGVGGDAITSGLEVIWTTTPTRWSNDFFDHLFGYEWELTTSPAGAHQWRPKAGAGADSVPDPHDPNKRRTPSMLTTDLSLRFDPAYEAISRRFHEHPEQLAEAFSRAWFKLTHRDMGPRARYLGPEVPAEELIWQDPIPAVNHPLIDAQDIQQLKGQILNSGLSVAQLVSTAWASASTFRGSDKRGGANGARIRLAPQKDWEVNQPQQLAQVLQGLEALQSAFNSAQSTGKRVSLADLIVLGGCAAVELAAKNAGYSISVPFAPGRMDASQEQTDVESFAVLEPVADGFRNYLKPVSGITAEALLVDRAQLLTLTAPQLTVLLGGLRVLGANVGQSPHGVFTSRPGTLSNDFFVNLLDMGTQWKPQSEARDLYEGSDRATGQYKWSGTRVDLLLGSNSQLRALAEVYAAADAGEQFVKDFVAAWDKVMNLDRFDLR</sequence>
<gene>
    <name evidence="1" type="primary">katG</name>
    <name type="ordered locus">PFL_2690</name>
</gene>
<comment type="function">
    <text evidence="1">Bifunctional enzyme with both catalase and broad-spectrum peroxidase activity.</text>
</comment>
<comment type="catalytic activity">
    <reaction evidence="1">
        <text>H2O2 + AH2 = A + 2 H2O</text>
        <dbReference type="Rhea" id="RHEA:30275"/>
        <dbReference type="ChEBI" id="CHEBI:13193"/>
        <dbReference type="ChEBI" id="CHEBI:15377"/>
        <dbReference type="ChEBI" id="CHEBI:16240"/>
        <dbReference type="ChEBI" id="CHEBI:17499"/>
        <dbReference type="EC" id="1.11.1.21"/>
    </reaction>
</comment>
<comment type="catalytic activity">
    <reaction evidence="1">
        <text>2 H2O2 = O2 + 2 H2O</text>
        <dbReference type="Rhea" id="RHEA:20309"/>
        <dbReference type="ChEBI" id="CHEBI:15377"/>
        <dbReference type="ChEBI" id="CHEBI:15379"/>
        <dbReference type="ChEBI" id="CHEBI:16240"/>
        <dbReference type="EC" id="1.11.1.21"/>
    </reaction>
</comment>
<comment type="cofactor">
    <cofactor evidence="1">
        <name>heme b</name>
        <dbReference type="ChEBI" id="CHEBI:60344"/>
    </cofactor>
    <text evidence="1">Binds 1 heme b (iron(II)-protoporphyrin IX) group per dimer.</text>
</comment>
<comment type="subunit">
    <text evidence="1">Homodimer or homotetramer.</text>
</comment>
<comment type="PTM">
    <text evidence="1">Formation of the three residue Trp-Tyr-Met cross-link is important for the catalase, but not the peroxidase activity of the enzyme.</text>
</comment>
<comment type="similarity">
    <text evidence="1">Belongs to the peroxidase family. Peroxidase/catalase subfamily.</text>
</comment>
<organism>
    <name type="scientific">Pseudomonas fluorescens (strain ATCC BAA-477 / NRRL B-23932 / Pf-5)</name>
    <dbReference type="NCBI Taxonomy" id="220664"/>
    <lineage>
        <taxon>Bacteria</taxon>
        <taxon>Pseudomonadati</taxon>
        <taxon>Pseudomonadota</taxon>
        <taxon>Gammaproteobacteria</taxon>
        <taxon>Pseudomonadales</taxon>
        <taxon>Pseudomonadaceae</taxon>
        <taxon>Pseudomonas</taxon>
    </lineage>
</organism>
<accession>Q4KD86</accession>
<dbReference type="EC" id="1.11.1.21" evidence="1"/>
<dbReference type="EMBL" id="CP000076">
    <property type="protein sequence ID" value="AAY91963.1"/>
    <property type="molecule type" value="Genomic_DNA"/>
</dbReference>
<dbReference type="RefSeq" id="WP_011060986.1">
    <property type="nucleotide sequence ID" value="NC_004129.6"/>
</dbReference>
<dbReference type="SMR" id="Q4KD86"/>
<dbReference type="STRING" id="220664.PFL_2690"/>
<dbReference type="PeroxiBase" id="3661">
    <property type="entry name" value="PfCP01_Pf5"/>
</dbReference>
<dbReference type="KEGG" id="pfl:PFL_2690"/>
<dbReference type="PATRIC" id="fig|220664.5.peg.2741"/>
<dbReference type="eggNOG" id="COG0376">
    <property type="taxonomic scope" value="Bacteria"/>
</dbReference>
<dbReference type="HOGENOM" id="CLU_025424_2_0_6"/>
<dbReference type="Proteomes" id="UP000008540">
    <property type="component" value="Chromosome"/>
</dbReference>
<dbReference type="GO" id="GO:0005829">
    <property type="term" value="C:cytosol"/>
    <property type="evidence" value="ECO:0007669"/>
    <property type="project" value="TreeGrafter"/>
</dbReference>
<dbReference type="GO" id="GO:0004096">
    <property type="term" value="F:catalase activity"/>
    <property type="evidence" value="ECO:0007669"/>
    <property type="project" value="UniProtKB-UniRule"/>
</dbReference>
<dbReference type="GO" id="GO:0020037">
    <property type="term" value="F:heme binding"/>
    <property type="evidence" value="ECO:0007669"/>
    <property type="project" value="InterPro"/>
</dbReference>
<dbReference type="GO" id="GO:0046872">
    <property type="term" value="F:metal ion binding"/>
    <property type="evidence" value="ECO:0007669"/>
    <property type="project" value="UniProtKB-KW"/>
</dbReference>
<dbReference type="GO" id="GO:0070301">
    <property type="term" value="P:cellular response to hydrogen peroxide"/>
    <property type="evidence" value="ECO:0007669"/>
    <property type="project" value="TreeGrafter"/>
</dbReference>
<dbReference type="GO" id="GO:0042744">
    <property type="term" value="P:hydrogen peroxide catabolic process"/>
    <property type="evidence" value="ECO:0007669"/>
    <property type="project" value="UniProtKB-KW"/>
</dbReference>
<dbReference type="CDD" id="cd00649">
    <property type="entry name" value="catalase_peroxidase_1"/>
    <property type="match status" value="1"/>
</dbReference>
<dbReference type="CDD" id="cd08200">
    <property type="entry name" value="catalase_peroxidase_2"/>
    <property type="match status" value="1"/>
</dbReference>
<dbReference type="FunFam" id="1.10.420.10:FF:000002">
    <property type="entry name" value="Catalase-peroxidase"/>
    <property type="match status" value="1"/>
</dbReference>
<dbReference type="FunFam" id="1.10.420.10:FF:000004">
    <property type="entry name" value="Catalase-peroxidase"/>
    <property type="match status" value="1"/>
</dbReference>
<dbReference type="FunFam" id="1.10.520.10:FF:000002">
    <property type="entry name" value="Catalase-peroxidase"/>
    <property type="match status" value="1"/>
</dbReference>
<dbReference type="FunFam" id="1.10.520.10:FF:000004">
    <property type="entry name" value="Catalase-peroxidase"/>
    <property type="match status" value="1"/>
</dbReference>
<dbReference type="Gene3D" id="1.10.520.10">
    <property type="match status" value="2"/>
</dbReference>
<dbReference type="Gene3D" id="1.10.420.10">
    <property type="entry name" value="Peroxidase, domain 2"/>
    <property type="match status" value="2"/>
</dbReference>
<dbReference type="HAMAP" id="MF_01961">
    <property type="entry name" value="Catal_peroxid"/>
    <property type="match status" value="1"/>
</dbReference>
<dbReference type="InterPro" id="IPR000763">
    <property type="entry name" value="Catalase_peroxidase"/>
</dbReference>
<dbReference type="InterPro" id="IPR002016">
    <property type="entry name" value="Haem_peroxidase"/>
</dbReference>
<dbReference type="InterPro" id="IPR010255">
    <property type="entry name" value="Haem_peroxidase_sf"/>
</dbReference>
<dbReference type="InterPro" id="IPR019794">
    <property type="entry name" value="Peroxidases_AS"/>
</dbReference>
<dbReference type="InterPro" id="IPR019793">
    <property type="entry name" value="Peroxidases_heam-ligand_BS"/>
</dbReference>
<dbReference type="NCBIfam" id="TIGR00198">
    <property type="entry name" value="cat_per_HPI"/>
    <property type="match status" value="1"/>
</dbReference>
<dbReference type="NCBIfam" id="NF011635">
    <property type="entry name" value="PRK15061.1"/>
    <property type="match status" value="1"/>
</dbReference>
<dbReference type="PANTHER" id="PTHR30555:SF0">
    <property type="entry name" value="CATALASE-PEROXIDASE"/>
    <property type="match status" value="1"/>
</dbReference>
<dbReference type="PANTHER" id="PTHR30555">
    <property type="entry name" value="HYDROPEROXIDASE I, BIFUNCTIONAL CATALASE-PEROXIDASE"/>
    <property type="match status" value="1"/>
</dbReference>
<dbReference type="Pfam" id="PF00141">
    <property type="entry name" value="peroxidase"/>
    <property type="match status" value="2"/>
</dbReference>
<dbReference type="PRINTS" id="PR00460">
    <property type="entry name" value="BPEROXIDASE"/>
</dbReference>
<dbReference type="PRINTS" id="PR00458">
    <property type="entry name" value="PEROXIDASE"/>
</dbReference>
<dbReference type="SUPFAM" id="SSF48113">
    <property type="entry name" value="Heme-dependent peroxidases"/>
    <property type="match status" value="2"/>
</dbReference>
<dbReference type="PROSITE" id="PS00435">
    <property type="entry name" value="PEROXIDASE_1"/>
    <property type="match status" value="1"/>
</dbReference>
<dbReference type="PROSITE" id="PS00436">
    <property type="entry name" value="PEROXIDASE_2"/>
    <property type="match status" value="1"/>
</dbReference>
<dbReference type="PROSITE" id="PS50873">
    <property type="entry name" value="PEROXIDASE_4"/>
    <property type="match status" value="1"/>
</dbReference>